<proteinExistence type="evidence at protein level"/>
<name>PHACA_EMEND</name>
<feature type="chain" id="PRO_0000418444" description="Phenylacetate 2-hydroxylase">
    <location>
        <begin position="1"/>
        <end position="518"/>
    </location>
</feature>
<feature type="binding site" description="axial binding residue" evidence="1">
    <location>
        <position position="437"/>
    </location>
    <ligand>
        <name>heme</name>
        <dbReference type="ChEBI" id="CHEBI:30413"/>
    </ligand>
    <ligandPart>
        <name>Fe</name>
        <dbReference type="ChEBI" id="CHEBI:18248"/>
    </ligandPart>
</feature>
<reference key="1">
    <citation type="journal article" date="1999" name="J. Biol. Chem.">
        <title>Disruption of phacA, an Aspergillus nidulans gene encoding a novel cytochrome P450 monooxygenase catalyzing phenylacetate 2-hydroxylation, results in penicillin overproduction.</title>
        <authorList>
            <person name="Mingot J.M."/>
            <person name="Penalva M.A."/>
            <person name="Fernandez-Canon J.M."/>
        </authorList>
    </citation>
    <scope>NUCLEOTIDE SEQUENCE [GENOMIC DNA]</scope>
    <scope>CATALYTIC ACTIVITY</scope>
    <scope>FUNCTION</scope>
    <scope>INDUCTION</scope>
    <scope>DISRUPTION PHENOTYPE</scope>
    <source>
        <strain>biA1</strain>
    </source>
</reference>
<keyword id="KW-0349">Heme</keyword>
<keyword id="KW-0408">Iron</keyword>
<keyword id="KW-0479">Metal-binding</keyword>
<keyword id="KW-0503">Monooxygenase</keyword>
<keyword id="KW-0520">NAD</keyword>
<keyword id="KW-0560">Oxidoreductase</keyword>
<sequence length="518" mass="58495">MSLQTIGIAAVAVVYFLIRYFNRTDIPKIKGLPEVPGVPIFGNLIQLGDQHATVAQKWAKKFGPVFQVRMGNKRVVFANTFDSVRQLWIKDQSALISRPTFHTFHSVVSSSQGFTIGTSPWDESCKRRRKAAATALNRPATQSYMPIIDLESMSSIRELLRDSANGTMDINPTAYFQRFALNTSLTLNYGIRIEGNVNDELLREIVDVERGVSNFRSTSNQWQDYIPLLRIFPKMNREAEEFRVRRDKYLTYLLDVLKDRIAKGTDKPCITGNILKDPEAKLNDAEIKSICLTMVSAGLDTVPGNLIMGIAYLASEDGQRIQKRAHDEIMKVYPDGDAWEKCLLEEKVPYVTALVKETLRFWTVIPICLPRENTKDIVWNGAVIPKGTTFFMNAYAADYDETHFTNPHAFEPERYLTASSDGSGTPHYGYGAGSRMCAGSHLANRELFTAYVRLITAFTMHPAKRAEDRPILDAIECNAIPTALTTEPKPFKVGFKPRDPVLVRKWIAESEERTKHLN</sequence>
<gene>
    <name type="primary">phacA</name>
</gene>
<accession>Q9Y7G5</accession>
<accession>Q5AUF2</accession>
<organism>
    <name type="scientific">Emericella nidulans</name>
    <name type="common">Aspergillus nidulans</name>
    <dbReference type="NCBI Taxonomy" id="162425"/>
    <lineage>
        <taxon>Eukaryota</taxon>
        <taxon>Fungi</taxon>
        <taxon>Dikarya</taxon>
        <taxon>Ascomycota</taxon>
        <taxon>Pezizomycotina</taxon>
        <taxon>Eurotiomycetes</taxon>
        <taxon>Eurotiomycetidae</taxon>
        <taxon>Eurotiales</taxon>
        <taxon>Aspergillaceae</taxon>
        <taxon>Aspergillus</taxon>
        <taxon>Aspergillus subgen. Nidulantes</taxon>
    </lineage>
</organism>
<evidence type="ECO:0000250" key="1"/>
<evidence type="ECO:0000269" key="2">
    <source>
    </source>
</evidence>
<evidence type="ECO:0000305" key="3"/>
<comment type="function">
    <text evidence="2">Catalyzes the hydroxylation of phenylacetate to 2-hydroxyphenylacetate in the homogentisate pathway. The homogentisate pathway is used to catabolize phenylacetate and use it as a carbon source. Can also catalyze the hydroxylation of 3-hydroxyphenylacetate to 2,5-dihydroxyphenylacetate (homogentisate) at low efficiency.</text>
</comment>
<comment type="catalytic activity">
    <reaction evidence="2">
        <text>2-phenylacetate + reduced [NADPH--hemoprotein reductase] + O2 = (2-hydroxyphenyl)acetate + oxidized [NADPH--hemoprotein reductase] + H2O + H(+)</text>
        <dbReference type="Rhea" id="RHEA:53392"/>
        <dbReference type="Rhea" id="RHEA-COMP:11964"/>
        <dbReference type="Rhea" id="RHEA-COMP:11965"/>
        <dbReference type="ChEBI" id="CHEBI:15377"/>
        <dbReference type="ChEBI" id="CHEBI:15378"/>
        <dbReference type="ChEBI" id="CHEBI:15379"/>
        <dbReference type="ChEBI" id="CHEBI:18401"/>
        <dbReference type="ChEBI" id="CHEBI:57618"/>
        <dbReference type="ChEBI" id="CHEBI:58210"/>
        <dbReference type="ChEBI" id="CHEBI:62423"/>
        <dbReference type="EC" id="1.14.14.54"/>
    </reaction>
</comment>
<comment type="pathway">
    <text>Aromatic compound metabolism; phenylacetate degradation.</text>
</comment>
<comment type="induction">
    <text evidence="2">Induced by phenylacetate.</text>
</comment>
<comment type="disruption phenotype">
    <text evidence="2">Increases penicillin production, probably by relieving the competition for the precursor phenylacetate by the catabolic homogentisate pathway and the penicillin biosynthetic pathway.</text>
</comment>
<comment type="similarity">
    <text evidence="3">Belongs to the cytochrome P450 family.</text>
</comment>
<dbReference type="EC" id="1.14.14.54" evidence="2"/>
<dbReference type="EMBL" id="AJ132442">
    <property type="protein sequence ID" value="CAB43093.1"/>
    <property type="molecule type" value="Genomic_DNA"/>
</dbReference>
<dbReference type="SMR" id="Q9Y7G5"/>
<dbReference type="OMA" id="DPRAYWQ"/>
<dbReference type="BRENDA" id="1.14.14.54">
    <property type="organism ID" value="517"/>
</dbReference>
<dbReference type="UniPathway" id="UPA00930"/>
<dbReference type="GO" id="GO:0020037">
    <property type="term" value="F:heme binding"/>
    <property type="evidence" value="ECO:0007669"/>
    <property type="project" value="InterPro"/>
</dbReference>
<dbReference type="GO" id="GO:0005506">
    <property type="term" value="F:iron ion binding"/>
    <property type="evidence" value="ECO:0007669"/>
    <property type="project" value="InterPro"/>
</dbReference>
<dbReference type="GO" id="GO:0018631">
    <property type="term" value="F:phenylacetate 2-hydroxylase activity"/>
    <property type="evidence" value="ECO:0000315"/>
    <property type="project" value="AspGD"/>
</dbReference>
<dbReference type="GO" id="GO:0042318">
    <property type="term" value="P:penicillin biosynthetic process"/>
    <property type="evidence" value="ECO:0000315"/>
    <property type="project" value="AspGD"/>
</dbReference>
<dbReference type="GO" id="GO:0010124">
    <property type="term" value="P:phenylacetate catabolic process"/>
    <property type="evidence" value="ECO:0000315"/>
    <property type="project" value="AspGD"/>
</dbReference>
<dbReference type="CDD" id="cd11066">
    <property type="entry name" value="CYP_PhacA-like"/>
    <property type="match status" value="1"/>
</dbReference>
<dbReference type="FunFam" id="1.10.630.10:FF:000072">
    <property type="entry name" value="3-hydroxyphenylacetate 6 hydroxylase"/>
    <property type="match status" value="1"/>
</dbReference>
<dbReference type="Gene3D" id="1.10.630.10">
    <property type="entry name" value="Cytochrome P450"/>
    <property type="match status" value="1"/>
</dbReference>
<dbReference type="InterPro" id="IPR001128">
    <property type="entry name" value="Cyt_P450"/>
</dbReference>
<dbReference type="InterPro" id="IPR002401">
    <property type="entry name" value="Cyt_P450_E_grp-I"/>
</dbReference>
<dbReference type="InterPro" id="IPR036396">
    <property type="entry name" value="Cyt_P450_sf"/>
</dbReference>
<dbReference type="InterPro" id="IPR050364">
    <property type="entry name" value="Cytochrome_P450_fung"/>
</dbReference>
<dbReference type="PANTHER" id="PTHR46300">
    <property type="entry name" value="P450, PUTATIVE (EUROFUNG)-RELATED-RELATED"/>
    <property type="match status" value="1"/>
</dbReference>
<dbReference type="PANTHER" id="PTHR46300:SF9">
    <property type="entry name" value="P450, PUTATIVE-RELATED"/>
    <property type="match status" value="1"/>
</dbReference>
<dbReference type="Pfam" id="PF00067">
    <property type="entry name" value="p450"/>
    <property type="match status" value="1"/>
</dbReference>
<dbReference type="PRINTS" id="PR00463">
    <property type="entry name" value="EP450I"/>
</dbReference>
<dbReference type="PRINTS" id="PR00385">
    <property type="entry name" value="P450"/>
</dbReference>
<dbReference type="SUPFAM" id="SSF48264">
    <property type="entry name" value="Cytochrome P450"/>
    <property type="match status" value="1"/>
</dbReference>
<protein>
    <recommendedName>
        <fullName>Phenylacetate 2-hydroxylase</fullName>
        <ecNumber evidence="2">1.14.14.54</ecNumber>
    </recommendedName>
</protein>